<reference key="1">
    <citation type="journal article" date="2010" name="Environ. Microbiol.">
        <title>The genome of Syntrophomonas wolfei: new insights into syntrophic metabolism and biohydrogen production.</title>
        <authorList>
            <person name="Sieber J.R."/>
            <person name="Sims D.R."/>
            <person name="Han C."/>
            <person name="Kim E."/>
            <person name="Lykidis A."/>
            <person name="Lapidus A.L."/>
            <person name="McDonnald E."/>
            <person name="Rohlin L."/>
            <person name="Culley D.E."/>
            <person name="Gunsalus R."/>
            <person name="McInerney M.J."/>
        </authorList>
    </citation>
    <scope>NUCLEOTIDE SEQUENCE [LARGE SCALE GENOMIC DNA]</scope>
    <source>
        <strain>DSM 2245B / Goettingen</strain>
    </source>
</reference>
<feature type="propeptide" id="PRO_0000459973" evidence="1">
    <location>
        <begin position="1"/>
        <end position="9"/>
    </location>
</feature>
<feature type="chain" id="PRO_1000072548" description="Large ribosomal subunit protein bL27">
    <location>
        <begin position="10"/>
        <end position="97"/>
    </location>
</feature>
<accession>Q0AWJ2</accession>
<organism>
    <name type="scientific">Syntrophomonas wolfei subsp. wolfei (strain DSM 2245B / Goettingen)</name>
    <dbReference type="NCBI Taxonomy" id="335541"/>
    <lineage>
        <taxon>Bacteria</taxon>
        <taxon>Bacillati</taxon>
        <taxon>Bacillota</taxon>
        <taxon>Clostridia</taxon>
        <taxon>Eubacteriales</taxon>
        <taxon>Syntrophomonadaceae</taxon>
        <taxon>Syntrophomonas</taxon>
    </lineage>
</organism>
<name>RL27_SYNWW</name>
<evidence type="ECO:0000250" key="1">
    <source>
        <dbReference type="UniProtKB" id="Q2FXT0"/>
    </source>
</evidence>
<evidence type="ECO:0000255" key="2">
    <source>
        <dbReference type="HAMAP-Rule" id="MF_00539"/>
    </source>
</evidence>
<evidence type="ECO:0000305" key="3"/>
<dbReference type="EMBL" id="CP000448">
    <property type="protein sequence ID" value="ABI68912.1"/>
    <property type="molecule type" value="Genomic_DNA"/>
</dbReference>
<dbReference type="RefSeq" id="WP_011641010.1">
    <property type="nucleotide sequence ID" value="NC_008346.1"/>
</dbReference>
<dbReference type="SMR" id="Q0AWJ2"/>
<dbReference type="STRING" id="335541.Swol_1611"/>
<dbReference type="KEGG" id="swo:Swol_1611"/>
<dbReference type="eggNOG" id="COG0211">
    <property type="taxonomic scope" value="Bacteria"/>
</dbReference>
<dbReference type="HOGENOM" id="CLU_095424_4_0_9"/>
<dbReference type="OrthoDB" id="9803474at2"/>
<dbReference type="Proteomes" id="UP000001968">
    <property type="component" value="Chromosome"/>
</dbReference>
<dbReference type="GO" id="GO:0022625">
    <property type="term" value="C:cytosolic large ribosomal subunit"/>
    <property type="evidence" value="ECO:0007669"/>
    <property type="project" value="TreeGrafter"/>
</dbReference>
<dbReference type="GO" id="GO:0003735">
    <property type="term" value="F:structural constituent of ribosome"/>
    <property type="evidence" value="ECO:0007669"/>
    <property type="project" value="InterPro"/>
</dbReference>
<dbReference type="GO" id="GO:0006412">
    <property type="term" value="P:translation"/>
    <property type="evidence" value="ECO:0007669"/>
    <property type="project" value="UniProtKB-UniRule"/>
</dbReference>
<dbReference type="FunFam" id="2.40.50.100:FF:000004">
    <property type="entry name" value="50S ribosomal protein L27"/>
    <property type="match status" value="1"/>
</dbReference>
<dbReference type="Gene3D" id="2.40.50.100">
    <property type="match status" value="1"/>
</dbReference>
<dbReference type="HAMAP" id="MF_00539">
    <property type="entry name" value="Ribosomal_bL27"/>
    <property type="match status" value="1"/>
</dbReference>
<dbReference type="InterPro" id="IPR001684">
    <property type="entry name" value="Ribosomal_bL27"/>
</dbReference>
<dbReference type="InterPro" id="IPR018261">
    <property type="entry name" value="Ribosomal_bL27_CS"/>
</dbReference>
<dbReference type="NCBIfam" id="TIGR00062">
    <property type="entry name" value="L27"/>
    <property type="match status" value="1"/>
</dbReference>
<dbReference type="PANTHER" id="PTHR15893:SF0">
    <property type="entry name" value="LARGE RIBOSOMAL SUBUNIT PROTEIN BL27M"/>
    <property type="match status" value="1"/>
</dbReference>
<dbReference type="PANTHER" id="PTHR15893">
    <property type="entry name" value="RIBOSOMAL PROTEIN L27"/>
    <property type="match status" value="1"/>
</dbReference>
<dbReference type="Pfam" id="PF01016">
    <property type="entry name" value="Ribosomal_L27"/>
    <property type="match status" value="1"/>
</dbReference>
<dbReference type="PRINTS" id="PR00063">
    <property type="entry name" value="RIBOSOMALL27"/>
</dbReference>
<dbReference type="SUPFAM" id="SSF110324">
    <property type="entry name" value="Ribosomal L27 protein-like"/>
    <property type="match status" value="1"/>
</dbReference>
<dbReference type="PROSITE" id="PS00831">
    <property type="entry name" value="RIBOSOMAL_L27"/>
    <property type="match status" value="1"/>
</dbReference>
<comment type="PTM">
    <text evidence="1">The N-terminus is cleaved by ribosomal processing cysteine protease Prp.</text>
</comment>
<comment type="similarity">
    <text evidence="2">Belongs to the bacterial ribosomal protein bL27 family.</text>
</comment>
<proteinExistence type="inferred from homology"/>
<sequence length="97" mass="10871">MFTFDLQLFAHKKGVGSSKNGRDSQSKRLGVKRYDGQIVTAGNILVRQRGTKIHPGQNVMIGGDDTLFAIIDGRVKFERKGRDKKQVSVYPLETMTM</sequence>
<gene>
    <name evidence="2" type="primary">rpmA</name>
    <name type="ordered locus">Swol_1611</name>
</gene>
<keyword id="KW-1185">Reference proteome</keyword>
<keyword id="KW-0687">Ribonucleoprotein</keyword>
<keyword id="KW-0689">Ribosomal protein</keyword>
<protein>
    <recommendedName>
        <fullName evidence="2">Large ribosomal subunit protein bL27</fullName>
    </recommendedName>
    <alternativeName>
        <fullName evidence="3">50S ribosomal protein L27</fullName>
    </alternativeName>
</protein>